<feature type="chain" id="PRO_0000437225" description="Uncharacterized transporter SPBPB10D8.07c">
    <location>
        <begin position="1"/>
        <end position="379"/>
    </location>
</feature>
<feature type="topological domain" description="Cytoplasmic" evidence="1">
    <location>
        <begin position="1"/>
        <end position="15"/>
    </location>
</feature>
<feature type="transmembrane region" description="Helical" evidence="2">
    <location>
        <begin position="16"/>
        <end position="36"/>
    </location>
</feature>
<feature type="topological domain" description="Extracellular" evidence="1">
    <location>
        <begin position="37"/>
        <end position="43"/>
    </location>
</feature>
<feature type="transmembrane region" description="Helical" evidence="2">
    <location>
        <begin position="44"/>
        <end position="64"/>
    </location>
</feature>
<feature type="topological domain" description="Cytoplasmic" evidence="1">
    <location>
        <begin position="65"/>
        <end position="84"/>
    </location>
</feature>
<feature type="transmembrane region" description="Helical" evidence="2">
    <location>
        <begin position="85"/>
        <end position="105"/>
    </location>
</feature>
<feature type="topological domain" description="Extracellular" evidence="1">
    <location>
        <begin position="106"/>
        <end position="116"/>
    </location>
</feature>
<feature type="transmembrane region" description="Helical" evidence="2">
    <location>
        <begin position="117"/>
        <end position="137"/>
    </location>
</feature>
<feature type="topological domain" description="Cytoplasmic" evidence="1">
    <location>
        <begin position="138"/>
        <end position="146"/>
    </location>
</feature>
<feature type="transmembrane region" description="Helical" evidence="2">
    <location>
        <begin position="147"/>
        <end position="167"/>
    </location>
</feature>
<feature type="topological domain" description="Extracellular" evidence="1">
    <location>
        <begin position="168"/>
        <end position="192"/>
    </location>
</feature>
<feature type="transmembrane region" description="Helical" evidence="2">
    <location>
        <begin position="193"/>
        <end position="213"/>
    </location>
</feature>
<feature type="topological domain" description="Cytoplasmic" evidence="1">
    <location>
        <begin position="214"/>
        <end position="224"/>
    </location>
</feature>
<feature type="transmembrane region" description="Helical" evidence="2">
    <location>
        <begin position="225"/>
        <end position="245"/>
    </location>
</feature>
<feature type="topological domain" description="Extracellular" evidence="1">
    <location>
        <begin position="246"/>
        <end position="276"/>
    </location>
</feature>
<feature type="transmembrane region" description="Helical" evidence="2">
    <location>
        <begin position="277"/>
        <end position="297"/>
    </location>
</feature>
<feature type="topological domain" description="Cytoplasmic" evidence="1">
    <location>
        <begin position="298"/>
        <end position="307"/>
    </location>
</feature>
<feature type="transmembrane region" description="Helical" evidence="2">
    <location>
        <begin position="308"/>
        <end position="327"/>
    </location>
</feature>
<feature type="topological domain" description="Extracellular" evidence="1">
    <location>
        <begin position="328"/>
        <end position="332"/>
    </location>
</feature>
<feature type="transmembrane region" description="Helical" evidence="2">
    <location>
        <begin position="333"/>
        <end position="353"/>
    </location>
</feature>
<feature type="topological domain" description="Cytoplasmic" evidence="1">
    <location>
        <begin position="354"/>
        <end position="379"/>
    </location>
</feature>
<evidence type="ECO:0000250" key="1">
    <source>
        <dbReference type="UniProtKB" id="P41930"/>
    </source>
</evidence>
<evidence type="ECO:0000255" key="2"/>
<accession>P0CT97</accession>
<accession>Q9C0Q1</accession>
<proteinExistence type="inferred from homology"/>
<protein>
    <recommendedName>
        <fullName>Uncharacterized transporter SPBPB10D8.07c</fullName>
    </recommendedName>
</protein>
<sequence>MSWFYRFFIRDYQNCWMVSIMGTGLSANVLHNFPFAARWLRICSYIMFGFALVCLFTNTIVFFFKHTIYRGTLIQKEEFIDVPNTLFLGCYTMGFQSCINMLCFLSSQSSPQGWINFLYILWIFSVAMSFFTAWVIFSTILTKRAKIEFSTFLPTILLPIVPLTVAASTGSVVIETFSTRLNKKIILNTIVTSFICWSNAIALGFCIIACILWRMIFFKVPARALIFTQFVPIGVLGQGAFGIIMQAINAKTFALSYYQQIPMIEFYSNCVLVQSLILSLFLISFGYFFTFFAVFSVINYGFRHKFTVAWWAMTFPLGTMSISNTQLSKVTNIIFFRVIGAIYGTALILITIVCIVGNTIMAIQKLKSETSSKNLVGII</sequence>
<keyword id="KW-1003">Cell membrane</keyword>
<keyword id="KW-0472">Membrane</keyword>
<keyword id="KW-1185">Reference proteome</keyword>
<keyword id="KW-0812">Transmembrane</keyword>
<keyword id="KW-1133">Transmembrane helix</keyword>
<keyword id="KW-0813">Transport</keyword>
<gene>
    <name type="ORF">SPBPB10D8.07c</name>
</gene>
<name>YHJ7_SCHPO</name>
<comment type="subcellular location">
    <subcellularLocation>
        <location evidence="1 2">Cell membrane</location>
        <topology evidence="1 2">Multi-pass membrane protein</topology>
    </subcellularLocation>
</comment>
<comment type="similarity">
    <text evidence="2">Belongs to the tellurite-resistance/dicarboxylate transporter (TDT) family.</text>
</comment>
<organism>
    <name type="scientific">Schizosaccharomyces pombe (strain 972 / ATCC 24843)</name>
    <name type="common">Fission yeast</name>
    <dbReference type="NCBI Taxonomy" id="284812"/>
    <lineage>
        <taxon>Eukaryota</taxon>
        <taxon>Fungi</taxon>
        <taxon>Dikarya</taxon>
        <taxon>Ascomycota</taxon>
        <taxon>Taphrinomycotina</taxon>
        <taxon>Schizosaccharomycetes</taxon>
        <taxon>Schizosaccharomycetales</taxon>
        <taxon>Schizosaccharomycetaceae</taxon>
        <taxon>Schizosaccharomyces</taxon>
    </lineage>
</organism>
<dbReference type="EMBL" id="CU329671">
    <property type="protein sequence ID" value="CAC36916.1"/>
    <property type="molecule type" value="Genomic_DNA"/>
</dbReference>
<dbReference type="RefSeq" id="NP_595047.1">
    <property type="nucleotide sequence ID" value="NM_001020952.2"/>
</dbReference>
<dbReference type="RefSeq" id="NP_595048.1">
    <property type="nucleotide sequence ID" value="NM_001020953.2"/>
</dbReference>
<dbReference type="RefSeq" id="NP_595049.1">
    <property type="nucleotide sequence ID" value="NM_001020954.2"/>
</dbReference>
<dbReference type="RefSeq" id="NP_595050.1">
    <property type="nucleotide sequence ID" value="NM_001020955.2"/>
</dbReference>
<dbReference type="FunCoup" id="P0CT97">
    <property type="interactions" value="75"/>
</dbReference>
<dbReference type="STRING" id="284812.P0CT97"/>
<dbReference type="EnsemblFungi" id="SPBPB10D8.04c.1">
    <property type="protein sequence ID" value="SPBPB10D8.04c.1:pep"/>
    <property type="gene ID" value="SPBPB10D8.04c"/>
</dbReference>
<dbReference type="EnsemblFungi" id="SPBPB10D8.05c.1">
    <property type="protein sequence ID" value="SPBPB10D8.05c.1:pep"/>
    <property type="gene ID" value="SPBPB10D8.05c"/>
</dbReference>
<dbReference type="EnsemblFungi" id="SPBPB10D8.06c.1">
    <property type="protein sequence ID" value="SPBPB10D8.06c.1:pep"/>
    <property type="gene ID" value="SPBPB10D8.06c"/>
</dbReference>
<dbReference type="EnsemblFungi" id="SPBPB10D8.07c.1">
    <property type="protein sequence ID" value="SPBPB10D8.07c.1:pep"/>
    <property type="gene ID" value="SPBPB10D8.07c"/>
</dbReference>
<dbReference type="KEGG" id="spo:2541374"/>
<dbReference type="KEGG" id="spo:2541377"/>
<dbReference type="KEGG" id="spo:2541392"/>
<dbReference type="KEGG" id="spo:2541401"/>
<dbReference type="PomBase" id="SPBPB10D8.07c"/>
<dbReference type="VEuPathDB" id="FungiDB:SPBPB10D8.04c"/>
<dbReference type="VEuPathDB" id="FungiDB:SPBPB10D8.05c"/>
<dbReference type="VEuPathDB" id="FungiDB:SPBPB10D8.06c"/>
<dbReference type="VEuPathDB" id="FungiDB:SPBPB10D8.07c"/>
<dbReference type="InParanoid" id="P0CT97"/>
<dbReference type="OMA" id="WIIDAVI"/>
<dbReference type="PhylomeDB" id="P0CT97"/>
<dbReference type="PRO" id="PR:P0CT97"/>
<dbReference type="Proteomes" id="UP000002485">
    <property type="component" value="Chromosome II"/>
</dbReference>
<dbReference type="GO" id="GO:0005886">
    <property type="term" value="C:plasma membrane"/>
    <property type="evidence" value="ECO:0000318"/>
    <property type="project" value="GO_Central"/>
</dbReference>
<dbReference type="GO" id="GO:0000319">
    <property type="term" value="F:sulfite transmembrane transporter activity"/>
    <property type="evidence" value="ECO:0000318"/>
    <property type="project" value="GO_Central"/>
</dbReference>
<dbReference type="GO" id="GO:0000316">
    <property type="term" value="P:sulfite transmembrane transport"/>
    <property type="evidence" value="ECO:0000318"/>
    <property type="project" value="GO_Central"/>
</dbReference>
<dbReference type="CDD" id="cd09318">
    <property type="entry name" value="TDT_SSU1"/>
    <property type="match status" value="1"/>
</dbReference>
<dbReference type="FunFam" id="1.50.10.150:FF:000004">
    <property type="entry name" value="Malic acid transporter"/>
    <property type="match status" value="1"/>
</dbReference>
<dbReference type="Gene3D" id="1.50.10.150">
    <property type="entry name" value="Voltage-dependent anion channel"/>
    <property type="match status" value="1"/>
</dbReference>
<dbReference type="InterPro" id="IPR004695">
    <property type="entry name" value="SLAC1/Mae1/Ssu1/TehA"/>
</dbReference>
<dbReference type="InterPro" id="IPR051629">
    <property type="entry name" value="Sulfite_efflux_TDT"/>
</dbReference>
<dbReference type="InterPro" id="IPR038665">
    <property type="entry name" value="Voltage-dep_anion_channel_sf"/>
</dbReference>
<dbReference type="PANTHER" id="PTHR31686">
    <property type="match status" value="1"/>
</dbReference>
<dbReference type="PANTHER" id="PTHR31686:SF1">
    <property type="entry name" value="SULFITE EFFLUX PUMP SSU1"/>
    <property type="match status" value="1"/>
</dbReference>
<dbReference type="Pfam" id="PF03595">
    <property type="entry name" value="SLAC1"/>
    <property type="match status" value="1"/>
</dbReference>
<reference key="1">
    <citation type="journal article" date="2002" name="Nature">
        <title>The genome sequence of Schizosaccharomyces pombe.</title>
        <authorList>
            <person name="Wood V."/>
            <person name="Gwilliam R."/>
            <person name="Rajandream M.A."/>
            <person name="Lyne M.H."/>
            <person name="Lyne R."/>
            <person name="Stewart A."/>
            <person name="Sgouros J.G."/>
            <person name="Peat N."/>
            <person name="Hayles J."/>
            <person name="Baker S.G."/>
            <person name="Basham D."/>
            <person name="Bowman S."/>
            <person name="Brooks K."/>
            <person name="Brown D."/>
            <person name="Brown S."/>
            <person name="Chillingworth T."/>
            <person name="Churcher C.M."/>
            <person name="Collins M."/>
            <person name="Connor R."/>
            <person name="Cronin A."/>
            <person name="Davis P."/>
            <person name="Feltwell T."/>
            <person name="Fraser A."/>
            <person name="Gentles S."/>
            <person name="Goble A."/>
            <person name="Hamlin N."/>
            <person name="Harris D.E."/>
            <person name="Hidalgo J."/>
            <person name="Hodgson G."/>
            <person name="Holroyd S."/>
            <person name="Hornsby T."/>
            <person name="Howarth S."/>
            <person name="Huckle E.J."/>
            <person name="Hunt S."/>
            <person name="Jagels K."/>
            <person name="James K.D."/>
            <person name="Jones L."/>
            <person name="Jones M."/>
            <person name="Leather S."/>
            <person name="McDonald S."/>
            <person name="McLean J."/>
            <person name="Mooney P."/>
            <person name="Moule S."/>
            <person name="Mungall K.L."/>
            <person name="Murphy L.D."/>
            <person name="Niblett D."/>
            <person name="Odell C."/>
            <person name="Oliver K."/>
            <person name="O'Neil S."/>
            <person name="Pearson D."/>
            <person name="Quail M.A."/>
            <person name="Rabbinowitsch E."/>
            <person name="Rutherford K.M."/>
            <person name="Rutter S."/>
            <person name="Saunders D."/>
            <person name="Seeger K."/>
            <person name="Sharp S."/>
            <person name="Skelton J."/>
            <person name="Simmonds M.N."/>
            <person name="Squares R."/>
            <person name="Squares S."/>
            <person name="Stevens K."/>
            <person name="Taylor K."/>
            <person name="Taylor R.G."/>
            <person name="Tivey A."/>
            <person name="Walsh S.V."/>
            <person name="Warren T."/>
            <person name="Whitehead S."/>
            <person name="Woodward J.R."/>
            <person name="Volckaert G."/>
            <person name="Aert R."/>
            <person name="Robben J."/>
            <person name="Grymonprez B."/>
            <person name="Weltjens I."/>
            <person name="Vanstreels E."/>
            <person name="Rieger M."/>
            <person name="Schaefer M."/>
            <person name="Mueller-Auer S."/>
            <person name="Gabel C."/>
            <person name="Fuchs M."/>
            <person name="Duesterhoeft A."/>
            <person name="Fritzc C."/>
            <person name="Holzer E."/>
            <person name="Moestl D."/>
            <person name="Hilbert H."/>
            <person name="Borzym K."/>
            <person name="Langer I."/>
            <person name="Beck A."/>
            <person name="Lehrach H."/>
            <person name="Reinhardt R."/>
            <person name="Pohl T.M."/>
            <person name="Eger P."/>
            <person name="Zimmermann W."/>
            <person name="Wedler H."/>
            <person name="Wambutt R."/>
            <person name="Purnelle B."/>
            <person name="Goffeau A."/>
            <person name="Cadieu E."/>
            <person name="Dreano S."/>
            <person name="Gloux S."/>
            <person name="Lelaure V."/>
            <person name="Mottier S."/>
            <person name="Galibert F."/>
            <person name="Aves S.J."/>
            <person name="Xiang Z."/>
            <person name="Hunt C."/>
            <person name="Moore K."/>
            <person name="Hurst S.M."/>
            <person name="Lucas M."/>
            <person name="Rochet M."/>
            <person name="Gaillardin C."/>
            <person name="Tallada V.A."/>
            <person name="Garzon A."/>
            <person name="Thode G."/>
            <person name="Daga R.R."/>
            <person name="Cruzado L."/>
            <person name="Jimenez J."/>
            <person name="Sanchez M."/>
            <person name="del Rey F."/>
            <person name="Benito J."/>
            <person name="Dominguez A."/>
            <person name="Revuelta J.L."/>
            <person name="Moreno S."/>
            <person name="Armstrong J."/>
            <person name="Forsburg S.L."/>
            <person name="Cerutti L."/>
            <person name="Lowe T."/>
            <person name="McCombie W.R."/>
            <person name="Paulsen I."/>
            <person name="Potashkin J."/>
            <person name="Shpakovski G.V."/>
            <person name="Ussery D."/>
            <person name="Barrell B.G."/>
            <person name="Nurse P."/>
        </authorList>
    </citation>
    <scope>NUCLEOTIDE SEQUENCE [LARGE SCALE GENOMIC DNA]</scope>
    <source>
        <strain>972 / ATCC 24843</strain>
    </source>
</reference>